<evidence type="ECO:0000255" key="1">
    <source>
        <dbReference type="HAMAP-Rule" id="MF_00161"/>
    </source>
</evidence>
<proteinExistence type="inferred from homology"/>
<name>LSPA_YERPP</name>
<keyword id="KW-0064">Aspartyl protease</keyword>
<keyword id="KW-0997">Cell inner membrane</keyword>
<keyword id="KW-1003">Cell membrane</keyword>
<keyword id="KW-0378">Hydrolase</keyword>
<keyword id="KW-0472">Membrane</keyword>
<keyword id="KW-0645">Protease</keyword>
<keyword id="KW-0812">Transmembrane</keyword>
<keyword id="KW-1133">Transmembrane helix</keyword>
<comment type="function">
    <text evidence="1">This protein specifically catalyzes the removal of signal peptides from prolipoproteins.</text>
</comment>
<comment type="catalytic activity">
    <reaction evidence="1">
        <text>Release of signal peptides from bacterial membrane prolipoproteins. Hydrolyzes -Xaa-Yaa-Zaa-|-(S,diacylglyceryl)Cys-, in which Xaa is hydrophobic (preferably Leu), and Yaa (Ala or Ser) and Zaa (Gly or Ala) have small, neutral side chains.</text>
        <dbReference type="EC" id="3.4.23.36"/>
    </reaction>
</comment>
<comment type="pathway">
    <text evidence="1">Protein modification; lipoprotein biosynthesis (signal peptide cleavage).</text>
</comment>
<comment type="subcellular location">
    <subcellularLocation>
        <location evidence="1">Cell inner membrane</location>
        <topology evidence="1">Multi-pass membrane protein</topology>
    </subcellularLocation>
</comment>
<comment type="similarity">
    <text evidence="1">Belongs to the peptidase A8 family.</text>
</comment>
<reference key="1">
    <citation type="submission" date="2007-02" db="EMBL/GenBank/DDBJ databases">
        <title>Complete sequence of chromosome of Yersinia pestis Pestoides F.</title>
        <authorList>
            <consortium name="US DOE Joint Genome Institute"/>
            <person name="Copeland A."/>
            <person name="Lucas S."/>
            <person name="Lapidus A."/>
            <person name="Barry K."/>
            <person name="Detter J.C."/>
            <person name="Glavina del Rio T."/>
            <person name="Hammon N."/>
            <person name="Israni S."/>
            <person name="Dalin E."/>
            <person name="Tice H."/>
            <person name="Pitluck S."/>
            <person name="Di Bartolo G."/>
            <person name="Chain P."/>
            <person name="Malfatti S."/>
            <person name="Shin M."/>
            <person name="Vergez L."/>
            <person name="Schmutz J."/>
            <person name="Larimer F."/>
            <person name="Land M."/>
            <person name="Hauser L."/>
            <person name="Worsham P."/>
            <person name="Chu M."/>
            <person name="Bearden S."/>
            <person name="Garcia E."/>
            <person name="Richardson P."/>
        </authorList>
    </citation>
    <scope>NUCLEOTIDE SEQUENCE [LARGE SCALE GENOMIC DNA]</scope>
    <source>
        <strain>Pestoides F</strain>
    </source>
</reference>
<accession>A4TQF2</accession>
<dbReference type="EC" id="3.4.23.36" evidence="1"/>
<dbReference type="EMBL" id="CP000668">
    <property type="protein sequence ID" value="ABP41514.1"/>
    <property type="molecule type" value="Genomic_DNA"/>
</dbReference>
<dbReference type="RefSeq" id="WP_002210508.1">
    <property type="nucleotide sequence ID" value="NZ_CP009715.1"/>
</dbReference>
<dbReference type="SMR" id="A4TQF2"/>
<dbReference type="MEROPS" id="A08.001"/>
<dbReference type="GeneID" id="57974134"/>
<dbReference type="KEGG" id="ypp:YPDSF_3156"/>
<dbReference type="PATRIC" id="fig|386656.14.peg.1195"/>
<dbReference type="UniPathway" id="UPA00665"/>
<dbReference type="GO" id="GO:0005886">
    <property type="term" value="C:plasma membrane"/>
    <property type="evidence" value="ECO:0007669"/>
    <property type="project" value="UniProtKB-SubCell"/>
</dbReference>
<dbReference type="GO" id="GO:0004190">
    <property type="term" value="F:aspartic-type endopeptidase activity"/>
    <property type="evidence" value="ECO:0007669"/>
    <property type="project" value="UniProtKB-UniRule"/>
</dbReference>
<dbReference type="GO" id="GO:0006508">
    <property type="term" value="P:proteolysis"/>
    <property type="evidence" value="ECO:0007669"/>
    <property type="project" value="UniProtKB-KW"/>
</dbReference>
<dbReference type="HAMAP" id="MF_00161">
    <property type="entry name" value="LspA"/>
    <property type="match status" value="1"/>
</dbReference>
<dbReference type="InterPro" id="IPR001872">
    <property type="entry name" value="Peptidase_A8"/>
</dbReference>
<dbReference type="NCBIfam" id="TIGR00077">
    <property type="entry name" value="lspA"/>
    <property type="match status" value="1"/>
</dbReference>
<dbReference type="PANTHER" id="PTHR33695">
    <property type="entry name" value="LIPOPROTEIN SIGNAL PEPTIDASE"/>
    <property type="match status" value="1"/>
</dbReference>
<dbReference type="PANTHER" id="PTHR33695:SF1">
    <property type="entry name" value="LIPOPROTEIN SIGNAL PEPTIDASE"/>
    <property type="match status" value="1"/>
</dbReference>
<dbReference type="Pfam" id="PF01252">
    <property type="entry name" value="Peptidase_A8"/>
    <property type="match status" value="1"/>
</dbReference>
<dbReference type="PRINTS" id="PR00781">
    <property type="entry name" value="LIPOSIGPTASE"/>
</dbReference>
<dbReference type="PROSITE" id="PS00855">
    <property type="entry name" value="SPASE_II"/>
    <property type="match status" value="1"/>
</dbReference>
<protein>
    <recommendedName>
        <fullName evidence="1">Lipoprotein signal peptidase</fullName>
        <ecNumber evidence="1">3.4.23.36</ecNumber>
    </recommendedName>
    <alternativeName>
        <fullName evidence="1">Prolipoprotein signal peptidase</fullName>
    </alternativeName>
    <alternativeName>
        <fullName evidence="1">Signal peptidase II</fullName>
        <shortName evidence="1">SPase II</shortName>
    </alternativeName>
</protein>
<organism>
    <name type="scientific">Yersinia pestis (strain Pestoides F)</name>
    <dbReference type="NCBI Taxonomy" id="386656"/>
    <lineage>
        <taxon>Bacteria</taxon>
        <taxon>Pseudomonadati</taxon>
        <taxon>Pseudomonadota</taxon>
        <taxon>Gammaproteobacteria</taxon>
        <taxon>Enterobacterales</taxon>
        <taxon>Yersiniaceae</taxon>
        <taxon>Yersinia</taxon>
    </lineage>
</organism>
<gene>
    <name evidence="1" type="primary">lspA</name>
    <name type="ordered locus">YPDSF_3156</name>
</gene>
<feature type="chain" id="PRO_1000038828" description="Lipoprotein signal peptidase">
    <location>
        <begin position="1"/>
        <end position="169"/>
    </location>
</feature>
<feature type="transmembrane region" description="Helical" evidence="1">
    <location>
        <begin position="4"/>
        <end position="24"/>
    </location>
</feature>
<feature type="transmembrane region" description="Helical" evidence="1">
    <location>
        <begin position="29"/>
        <end position="49"/>
    </location>
</feature>
<feature type="transmembrane region" description="Helical" evidence="1">
    <location>
        <begin position="70"/>
        <end position="90"/>
    </location>
</feature>
<feature type="transmembrane region" description="Helical" evidence="1">
    <location>
        <begin position="101"/>
        <end position="121"/>
    </location>
</feature>
<feature type="transmembrane region" description="Helical" evidence="1">
    <location>
        <begin position="137"/>
        <end position="157"/>
    </location>
</feature>
<feature type="active site" evidence="1">
    <location>
        <position position="123"/>
    </location>
</feature>
<feature type="active site" evidence="1">
    <location>
        <position position="141"/>
    </location>
</feature>
<sequence length="169" mass="18937">MNKPICSTGLRWLWLAVVVVILDISSKQWVMAHFALYESVPLIPFFNLTYAQNFGAAFSFLADKSGWQRWFFAGIAIGISVVLMVMMYRSTAKQRLINCAYALIIGGALGNLYDRLVHGAVNDFLDFYINNWHFPTFNLADVAICIGAALVIFEGFLSPVEKNAVNNDE</sequence>